<organism>
    <name type="scientific">Arabidopsis thaliana</name>
    <name type="common">Mouse-ear cress</name>
    <dbReference type="NCBI Taxonomy" id="3702"/>
    <lineage>
        <taxon>Eukaryota</taxon>
        <taxon>Viridiplantae</taxon>
        <taxon>Streptophyta</taxon>
        <taxon>Embryophyta</taxon>
        <taxon>Tracheophyta</taxon>
        <taxon>Spermatophyta</taxon>
        <taxon>Magnoliopsida</taxon>
        <taxon>eudicotyledons</taxon>
        <taxon>Gunneridae</taxon>
        <taxon>Pentapetalae</taxon>
        <taxon>rosids</taxon>
        <taxon>malvids</taxon>
        <taxon>Brassicales</taxon>
        <taxon>Brassicaceae</taxon>
        <taxon>Camelineae</taxon>
        <taxon>Arabidopsis</taxon>
    </lineage>
</organism>
<gene>
    <name type="ordered locus">At2g25305</name>
    <name type="ORF">T22F11</name>
</gene>
<reference key="1">
    <citation type="journal article" date="1999" name="Nature">
        <title>Sequence and analysis of chromosome 2 of the plant Arabidopsis thaliana.</title>
        <authorList>
            <person name="Lin X."/>
            <person name="Kaul S."/>
            <person name="Rounsley S.D."/>
            <person name="Shea T.P."/>
            <person name="Benito M.-I."/>
            <person name="Town C.D."/>
            <person name="Fujii C.Y."/>
            <person name="Mason T.M."/>
            <person name="Bowman C.L."/>
            <person name="Barnstead M.E."/>
            <person name="Feldblyum T.V."/>
            <person name="Buell C.R."/>
            <person name="Ketchum K.A."/>
            <person name="Lee J.J."/>
            <person name="Ronning C.M."/>
            <person name="Koo H.L."/>
            <person name="Moffat K.S."/>
            <person name="Cronin L.A."/>
            <person name="Shen M."/>
            <person name="Pai G."/>
            <person name="Van Aken S."/>
            <person name="Umayam L."/>
            <person name="Tallon L.J."/>
            <person name="Gill J.E."/>
            <person name="Adams M.D."/>
            <person name="Carrera A.J."/>
            <person name="Creasy T.H."/>
            <person name="Goodman H.M."/>
            <person name="Somerville C.R."/>
            <person name="Copenhaver G.P."/>
            <person name="Preuss D."/>
            <person name="Nierman W.C."/>
            <person name="White O."/>
            <person name="Eisen J.A."/>
            <person name="Salzberg S.L."/>
            <person name="Fraser C.M."/>
            <person name="Venter J.C."/>
        </authorList>
    </citation>
    <scope>NUCLEOTIDE SEQUENCE [LARGE SCALE GENOMIC DNA]</scope>
    <source>
        <strain>cv. Columbia</strain>
    </source>
</reference>
<reference key="2">
    <citation type="journal article" date="2017" name="Plant J.">
        <title>Araport11: a complete reannotation of the Arabidopsis thaliana reference genome.</title>
        <authorList>
            <person name="Cheng C.Y."/>
            <person name="Krishnakumar V."/>
            <person name="Chan A.P."/>
            <person name="Thibaud-Nissen F."/>
            <person name="Schobel S."/>
            <person name="Town C.D."/>
        </authorList>
    </citation>
    <scope>GENOME REANNOTATION</scope>
    <source>
        <strain>cv. Columbia</strain>
    </source>
</reference>
<reference key="3">
    <citation type="journal article" date="2005" name="Plant Physiol.">
        <title>Genome organization of more than 300 defensin-like genes in Arabidopsis.</title>
        <authorList>
            <person name="Silverstein K.A.T."/>
            <person name="Graham M.A."/>
            <person name="Paape T.D."/>
            <person name="VandenBosch K.A."/>
        </authorList>
    </citation>
    <scope>GENE FAMILY</scope>
</reference>
<dbReference type="EMBL" id="AC007070">
    <property type="status" value="NOT_ANNOTATED_CDS"/>
    <property type="molecule type" value="Genomic_DNA"/>
</dbReference>
<dbReference type="EMBL" id="CP002685">
    <property type="protein sequence ID" value="AEC07685.1"/>
    <property type="molecule type" value="Genomic_DNA"/>
</dbReference>
<dbReference type="RefSeq" id="NP_973531.1">
    <property type="nucleotide sequence ID" value="NM_201802.2"/>
</dbReference>
<dbReference type="PaxDb" id="3702-AT2G25305.1"/>
<dbReference type="EnsemblPlants" id="AT2G25305.1">
    <property type="protein sequence ID" value="AT2G25305.1"/>
    <property type="gene ID" value="AT2G25305"/>
</dbReference>
<dbReference type="GeneID" id="2745560"/>
<dbReference type="Gramene" id="AT2G25305.1">
    <property type="protein sequence ID" value="AT2G25305.1"/>
    <property type="gene ID" value="AT2G25305"/>
</dbReference>
<dbReference type="KEGG" id="ath:AT2G25305"/>
<dbReference type="Araport" id="AT2G25305"/>
<dbReference type="TAIR" id="AT2G25305"/>
<dbReference type="HOGENOM" id="CLU_175051_0_0_1"/>
<dbReference type="InParanoid" id="Q3EBU2"/>
<dbReference type="OMA" id="HGVCILF"/>
<dbReference type="PhylomeDB" id="Q3EBU2"/>
<dbReference type="PRO" id="PR:Q3EBU2"/>
<dbReference type="Proteomes" id="UP000006548">
    <property type="component" value="Chromosome 2"/>
</dbReference>
<dbReference type="ExpressionAtlas" id="Q3EBU2">
    <property type="expression patterns" value="baseline and differential"/>
</dbReference>
<dbReference type="GO" id="GO:0005576">
    <property type="term" value="C:extracellular region"/>
    <property type="evidence" value="ECO:0007669"/>
    <property type="project" value="UniProtKB-SubCell"/>
</dbReference>
<dbReference type="GO" id="GO:0050832">
    <property type="term" value="P:defense response to fungus"/>
    <property type="evidence" value="ECO:0007669"/>
    <property type="project" value="UniProtKB-KW"/>
</dbReference>
<dbReference type="GO" id="GO:0031640">
    <property type="term" value="P:killing of cells of another organism"/>
    <property type="evidence" value="ECO:0007669"/>
    <property type="project" value="UniProtKB-KW"/>
</dbReference>
<dbReference type="InterPro" id="IPR056373">
    <property type="entry name" value="Defensin-like_dom"/>
</dbReference>
<dbReference type="Pfam" id="PF24552">
    <property type="entry name" value="Defensin"/>
    <property type="match status" value="1"/>
</dbReference>
<keyword id="KW-0929">Antimicrobial</keyword>
<keyword id="KW-1015">Disulfide bond</keyword>
<keyword id="KW-0295">Fungicide</keyword>
<keyword id="KW-0611">Plant defense</keyword>
<keyword id="KW-1185">Reference proteome</keyword>
<keyword id="KW-0964">Secreted</keyword>
<keyword id="KW-0732">Signal</keyword>
<evidence type="ECO:0000250" key="1"/>
<evidence type="ECO:0000255" key="2"/>
<evidence type="ECO:0000305" key="3"/>
<name>DEF67_ARATH</name>
<sequence>MGSSKLMVTCIVVAMLTISCDILSVEMGISVQALPPTCGPDCTGRFMNQDCSKYCAALSYKHGVCILFRGLPPRTSTLRCCCG</sequence>
<accession>Q3EBU2</accession>
<feature type="signal peptide" evidence="2">
    <location>
        <begin position="1"/>
        <end position="24"/>
    </location>
</feature>
<feature type="chain" id="PRO_0000379645" description="Putative defensin-like protein 67">
    <location>
        <begin position="25"/>
        <end position="83"/>
    </location>
</feature>
<feature type="disulfide bond" evidence="1">
    <location>
        <begin position="38"/>
        <end position="82"/>
    </location>
</feature>
<feature type="disulfide bond" evidence="1">
    <location>
        <begin position="42"/>
        <end position="65"/>
    </location>
</feature>
<feature type="disulfide bond" evidence="1">
    <location>
        <begin position="51"/>
        <end position="80"/>
    </location>
</feature>
<feature type="disulfide bond" evidence="1">
    <location>
        <begin position="55"/>
        <end position="81"/>
    </location>
</feature>
<protein>
    <recommendedName>
        <fullName>Putative defensin-like protein 67</fullName>
    </recommendedName>
</protein>
<comment type="subcellular location">
    <subcellularLocation>
        <location evidence="1">Secreted</location>
    </subcellularLocation>
</comment>
<comment type="similarity">
    <text evidence="3">Belongs to the DEFL family.</text>
</comment>
<proteinExistence type="inferred from homology"/>